<name>R144B_MOUSE</name>
<comment type="function">
    <text evidence="2 5">E3 ubiquitin-protein ligase which accepts ubiquitin from E2 ubiquitin-conjugating enzymes UBE2L3 and UBE2L6 in the form of a thioester and then directly transfers the ubiquitin to targeted substrates such as LCMT2, thereby promoting their degradation. Induces apoptosis via a p53/TP53-dependent but caspase-independent mechanism. Plays a crucial role in maintaining the genomic stability by controlling the degradation of multiple proteins involved in mitotic progression and DNA damage. Regulates epithelial homeostasis by mediating degradation of CDKN1A and isoform 2 of TP63. Plays a regulatory role in innate immunity by negatively regulating IRF3 activation and IFN-beta production. Mechanistically, inhibits TBK1 phosphorylation and 'Lys-63'-linked polyubiquitination independently of its E3 ligase activity. Alternatively, promotes 'Lys-27' and 'Lys-33'-linked ubiquitination of IFIH1/MDA5, promoting selective autophagic degradation of IFIH1/MDA5 to inhibit antiviral response (PubMed:39285245).</text>
</comment>
<comment type="catalytic activity">
    <reaction evidence="2">
        <text>[E2 ubiquitin-conjugating enzyme]-S-ubiquitinyl-L-cysteine + [acceptor protein]-L-lysine = [E2 ubiquitin-conjugating enzyme]-L-cysteine + [acceptor protein]-N(6)-ubiquitinyl-L-lysine.</text>
        <dbReference type="EC" id="2.3.2.31"/>
    </reaction>
</comment>
<comment type="pathway">
    <text>Protein modification; protein ubiquitination.</text>
</comment>
<comment type="subunit">
    <text evidence="2">Interacts with UBE2L3, UBE2L6 and LCMT2, as well as with BAX. Interacts with TBK1; this interaction inhibits TBK1 phosphorylation and 'Lys-63'-linked polyubiquitination.</text>
</comment>
<comment type="subcellular location">
    <subcellularLocation>
        <location evidence="2">Mitochondrion membrane</location>
        <topology evidence="2">Single-pass membrane protein</topology>
    </subcellularLocation>
    <subcellularLocation>
        <location evidence="2">Cytoplasm</location>
    </subcellularLocation>
    <text evidence="2">Mostly cytosololic, accumulates in submitochondrial domains specifically upon apoptosis induction, in synchrony with BAX activation.</text>
</comment>
<comment type="domain">
    <text evidence="1">Members of the RBR family are atypical E3 ligases. They interact with the E2 conjugating enzyme UBE2L3 and function like HECT-type E3 enzymes: they bind E2s via the first RING domain, but require an obligate trans-thiolation step during the ubiquitin transfer, requiring a conserved cysteine residue in the second RING domain.</text>
</comment>
<comment type="PTM">
    <text evidence="2">Auto-ubiquitinated.</text>
</comment>
<comment type="disruption phenotype">
    <text evidence="5">Rnf144b deletion mice have a significantly higher overall survival rate than wild-type mice upon EMCV infection.</text>
</comment>
<comment type="similarity">
    <text evidence="6">Belongs to the RBR family. RNF144 subfamily.</text>
</comment>
<comment type="caution">
    <text evidence="6">Lacks the His residue in the RING-type domain 2 that is one of the conserved features of the family.</text>
</comment>
<comment type="sequence caution" evidence="6">
    <conflict type="erroneous initiation">
        <sequence resource="EMBL-CDS" id="AAH25007"/>
    </conflict>
    <text>Truncated N-terminus.</text>
</comment>
<comment type="sequence caution" evidence="6">
    <conflict type="frameshift">
        <sequence resource="EMBL-CDS" id="AAH25007"/>
    </conflict>
</comment>
<dbReference type="EC" id="2.3.2.31" evidence="1"/>
<dbReference type="EMBL" id="AK040939">
    <property type="protein sequence ID" value="BAC30754.1"/>
    <property type="molecule type" value="mRNA"/>
</dbReference>
<dbReference type="EMBL" id="AK052846">
    <property type="protein sequence ID" value="BAC35173.1"/>
    <property type="molecule type" value="mRNA"/>
</dbReference>
<dbReference type="EMBL" id="AK053529">
    <property type="protein sequence ID" value="BAC35416.1"/>
    <property type="molecule type" value="mRNA"/>
</dbReference>
<dbReference type="EMBL" id="BC025007">
    <property type="protein sequence ID" value="AAH25007.1"/>
    <property type="status" value="ALT_SEQ"/>
    <property type="molecule type" value="mRNA"/>
</dbReference>
<dbReference type="CCDS" id="CCDS26491.1"/>
<dbReference type="RefSeq" id="NP_001164114.1">
    <property type="nucleotide sequence ID" value="NM_001170643.1"/>
</dbReference>
<dbReference type="RefSeq" id="NP_666154.3">
    <property type="nucleotide sequence ID" value="NM_146042.4"/>
</dbReference>
<dbReference type="SMR" id="Q8BKD6"/>
<dbReference type="BioGRID" id="230003">
    <property type="interactions" value="4"/>
</dbReference>
<dbReference type="FunCoup" id="Q8BKD6">
    <property type="interactions" value="103"/>
</dbReference>
<dbReference type="STRING" id="10090.ENSMUSP00000071017"/>
<dbReference type="PhosphoSitePlus" id="Q8BKD6"/>
<dbReference type="PaxDb" id="10090-ENSMUSP00000071017"/>
<dbReference type="ProteomicsDB" id="300302"/>
<dbReference type="Antibodypedia" id="2130">
    <property type="antibodies" value="427 antibodies from 27 providers"/>
</dbReference>
<dbReference type="DNASU" id="218215"/>
<dbReference type="Ensembl" id="ENSMUST00000068891.12">
    <property type="protein sequence ID" value="ENSMUSP00000071017.5"/>
    <property type="gene ID" value="ENSMUSG00000038068.16"/>
</dbReference>
<dbReference type="Ensembl" id="ENSMUST00000110111.4">
    <property type="protein sequence ID" value="ENSMUSP00000105738.3"/>
    <property type="gene ID" value="ENSMUSG00000038068.16"/>
</dbReference>
<dbReference type="GeneID" id="218215"/>
<dbReference type="KEGG" id="mmu:218215"/>
<dbReference type="UCSC" id="uc007qhx.2">
    <property type="organism name" value="mouse"/>
</dbReference>
<dbReference type="AGR" id="MGI:2384986"/>
<dbReference type="CTD" id="255488"/>
<dbReference type="MGI" id="MGI:2384986">
    <property type="gene designation" value="Rnf144b"/>
</dbReference>
<dbReference type="VEuPathDB" id="HostDB:ENSMUSG00000038068"/>
<dbReference type="eggNOG" id="KOG1815">
    <property type="taxonomic scope" value="Eukaryota"/>
</dbReference>
<dbReference type="GeneTree" id="ENSGT00940000158819"/>
<dbReference type="HOGENOM" id="CLU_053598_1_0_1"/>
<dbReference type="InParanoid" id="Q8BKD6"/>
<dbReference type="OMA" id="CPDMACR"/>
<dbReference type="OrthoDB" id="10009520at2759"/>
<dbReference type="PhylomeDB" id="Q8BKD6"/>
<dbReference type="TreeFam" id="TF324777"/>
<dbReference type="Reactome" id="R-MMU-983168">
    <property type="pathway name" value="Antigen processing: Ubiquitination &amp; Proteasome degradation"/>
</dbReference>
<dbReference type="UniPathway" id="UPA00143"/>
<dbReference type="BioGRID-ORCS" id="218215">
    <property type="hits" value="3 hits in 76 CRISPR screens"/>
</dbReference>
<dbReference type="ChiTaRS" id="Rnf144b">
    <property type="organism name" value="mouse"/>
</dbReference>
<dbReference type="PRO" id="PR:Q8BKD6"/>
<dbReference type="Proteomes" id="UP000000589">
    <property type="component" value="Chromosome 13"/>
</dbReference>
<dbReference type="RNAct" id="Q8BKD6">
    <property type="molecule type" value="protein"/>
</dbReference>
<dbReference type="Bgee" id="ENSMUSG00000038068">
    <property type="expression patterns" value="Expressed in urinary bladder urothelium and 220 other cell types or tissues"/>
</dbReference>
<dbReference type="GO" id="GO:0005737">
    <property type="term" value="C:cytoplasm"/>
    <property type="evidence" value="ECO:0000250"/>
    <property type="project" value="UniProtKB"/>
</dbReference>
<dbReference type="GO" id="GO:0031966">
    <property type="term" value="C:mitochondrial membrane"/>
    <property type="evidence" value="ECO:0000250"/>
    <property type="project" value="UniProtKB"/>
</dbReference>
<dbReference type="GO" id="GO:0004842">
    <property type="term" value="F:ubiquitin-protein transferase activity"/>
    <property type="evidence" value="ECO:0007669"/>
    <property type="project" value="Ensembl"/>
</dbReference>
<dbReference type="GO" id="GO:0008270">
    <property type="term" value="F:zinc ion binding"/>
    <property type="evidence" value="ECO:0007669"/>
    <property type="project" value="UniProtKB-KW"/>
</dbReference>
<dbReference type="GO" id="GO:0006915">
    <property type="term" value="P:apoptotic process"/>
    <property type="evidence" value="ECO:0007669"/>
    <property type="project" value="UniProtKB-KW"/>
</dbReference>
<dbReference type="GO" id="GO:0043066">
    <property type="term" value="P:negative regulation of apoptotic process"/>
    <property type="evidence" value="ECO:0000250"/>
    <property type="project" value="UniProtKB"/>
</dbReference>
<dbReference type="GO" id="GO:0016567">
    <property type="term" value="P:protein ubiquitination"/>
    <property type="evidence" value="ECO:0007669"/>
    <property type="project" value="UniProtKB-UniPathway"/>
</dbReference>
<dbReference type="GO" id="GO:0006511">
    <property type="term" value="P:ubiquitin-dependent protein catabolic process"/>
    <property type="evidence" value="ECO:0007669"/>
    <property type="project" value="Ensembl"/>
</dbReference>
<dbReference type="CDD" id="cd20367">
    <property type="entry name" value="BRcat_RBR_RNF144B"/>
    <property type="match status" value="1"/>
</dbReference>
<dbReference type="CDD" id="cd20369">
    <property type="entry name" value="Rcat_RBR_RNF144B"/>
    <property type="match status" value="1"/>
</dbReference>
<dbReference type="FunFam" id="1.20.120.1750:FF:000010">
    <property type="entry name" value="RBR-type E3 ubiquitin transferase"/>
    <property type="match status" value="1"/>
</dbReference>
<dbReference type="FunFam" id="3.30.40.10:FF:000051">
    <property type="entry name" value="RBR-type E3 ubiquitin transferase"/>
    <property type="match status" value="1"/>
</dbReference>
<dbReference type="Gene3D" id="1.20.120.1750">
    <property type="match status" value="1"/>
</dbReference>
<dbReference type="Gene3D" id="3.30.40.10">
    <property type="entry name" value="Zinc/RING finger domain, C3HC4 (zinc finger)"/>
    <property type="match status" value="1"/>
</dbReference>
<dbReference type="InterPro" id="IPR031127">
    <property type="entry name" value="E3_UB_ligase_RBR"/>
</dbReference>
<dbReference type="InterPro" id="IPR002867">
    <property type="entry name" value="IBR_dom"/>
</dbReference>
<dbReference type="InterPro" id="IPR044066">
    <property type="entry name" value="TRIAD_supradom"/>
</dbReference>
<dbReference type="InterPro" id="IPR001841">
    <property type="entry name" value="Znf_RING"/>
</dbReference>
<dbReference type="InterPro" id="IPR013083">
    <property type="entry name" value="Znf_RING/FYVE/PHD"/>
</dbReference>
<dbReference type="InterPro" id="IPR017907">
    <property type="entry name" value="Znf_RING_CS"/>
</dbReference>
<dbReference type="PANTHER" id="PTHR11685">
    <property type="entry name" value="RBR FAMILY RING FINGER AND IBR DOMAIN-CONTAINING"/>
    <property type="match status" value="1"/>
</dbReference>
<dbReference type="Pfam" id="PF01485">
    <property type="entry name" value="IBR"/>
    <property type="match status" value="1"/>
</dbReference>
<dbReference type="Pfam" id="PF22191">
    <property type="entry name" value="IBR_1"/>
    <property type="match status" value="1"/>
</dbReference>
<dbReference type="SMART" id="SM00647">
    <property type="entry name" value="IBR"/>
    <property type="match status" value="2"/>
</dbReference>
<dbReference type="SMART" id="SM00184">
    <property type="entry name" value="RING"/>
    <property type="match status" value="2"/>
</dbReference>
<dbReference type="SUPFAM" id="SSF57850">
    <property type="entry name" value="RING/U-box"/>
    <property type="match status" value="3"/>
</dbReference>
<dbReference type="PROSITE" id="PS51873">
    <property type="entry name" value="TRIAD"/>
    <property type="match status" value="1"/>
</dbReference>
<dbReference type="PROSITE" id="PS00518">
    <property type="entry name" value="ZF_RING_1"/>
    <property type="match status" value="1"/>
</dbReference>
<accession>Q8BKD6</accession>
<accession>Q8BG97</accession>
<accession>Q8R195</accession>
<organism>
    <name type="scientific">Mus musculus</name>
    <name type="common">Mouse</name>
    <dbReference type="NCBI Taxonomy" id="10090"/>
    <lineage>
        <taxon>Eukaryota</taxon>
        <taxon>Metazoa</taxon>
        <taxon>Chordata</taxon>
        <taxon>Craniata</taxon>
        <taxon>Vertebrata</taxon>
        <taxon>Euteleostomi</taxon>
        <taxon>Mammalia</taxon>
        <taxon>Eutheria</taxon>
        <taxon>Euarchontoglires</taxon>
        <taxon>Glires</taxon>
        <taxon>Rodentia</taxon>
        <taxon>Myomorpha</taxon>
        <taxon>Muroidea</taxon>
        <taxon>Muridae</taxon>
        <taxon>Murinae</taxon>
        <taxon>Mus</taxon>
        <taxon>Mus</taxon>
    </lineage>
</organism>
<protein>
    <recommendedName>
        <fullName>E3 ubiquitin-protein ligase RNF144B</fullName>
        <ecNumber evidence="1">2.3.2.31</ecNumber>
    </recommendedName>
    <alternativeName>
        <fullName>IBR domain-containing protein 2</fullName>
    </alternativeName>
    <alternativeName>
        <fullName>RING finger protein 144B</fullName>
    </alternativeName>
</protein>
<gene>
    <name type="primary">Rnf144b</name>
    <name type="synonym">Ibrdc2</name>
</gene>
<reference key="1">
    <citation type="journal article" date="2005" name="Science">
        <title>The transcriptional landscape of the mammalian genome.</title>
        <authorList>
            <person name="Carninci P."/>
            <person name="Kasukawa T."/>
            <person name="Katayama S."/>
            <person name="Gough J."/>
            <person name="Frith M.C."/>
            <person name="Maeda N."/>
            <person name="Oyama R."/>
            <person name="Ravasi T."/>
            <person name="Lenhard B."/>
            <person name="Wells C."/>
            <person name="Kodzius R."/>
            <person name="Shimokawa K."/>
            <person name="Bajic V.B."/>
            <person name="Brenner S.E."/>
            <person name="Batalov S."/>
            <person name="Forrest A.R."/>
            <person name="Zavolan M."/>
            <person name="Davis M.J."/>
            <person name="Wilming L.G."/>
            <person name="Aidinis V."/>
            <person name="Allen J.E."/>
            <person name="Ambesi-Impiombato A."/>
            <person name="Apweiler R."/>
            <person name="Aturaliya R.N."/>
            <person name="Bailey T.L."/>
            <person name="Bansal M."/>
            <person name="Baxter L."/>
            <person name="Beisel K.W."/>
            <person name="Bersano T."/>
            <person name="Bono H."/>
            <person name="Chalk A.M."/>
            <person name="Chiu K.P."/>
            <person name="Choudhary V."/>
            <person name="Christoffels A."/>
            <person name="Clutterbuck D.R."/>
            <person name="Crowe M.L."/>
            <person name="Dalla E."/>
            <person name="Dalrymple B.P."/>
            <person name="de Bono B."/>
            <person name="Della Gatta G."/>
            <person name="di Bernardo D."/>
            <person name="Down T."/>
            <person name="Engstrom P."/>
            <person name="Fagiolini M."/>
            <person name="Faulkner G."/>
            <person name="Fletcher C.F."/>
            <person name="Fukushima T."/>
            <person name="Furuno M."/>
            <person name="Futaki S."/>
            <person name="Gariboldi M."/>
            <person name="Georgii-Hemming P."/>
            <person name="Gingeras T.R."/>
            <person name="Gojobori T."/>
            <person name="Green R.E."/>
            <person name="Gustincich S."/>
            <person name="Harbers M."/>
            <person name="Hayashi Y."/>
            <person name="Hensch T.K."/>
            <person name="Hirokawa N."/>
            <person name="Hill D."/>
            <person name="Huminiecki L."/>
            <person name="Iacono M."/>
            <person name="Ikeo K."/>
            <person name="Iwama A."/>
            <person name="Ishikawa T."/>
            <person name="Jakt M."/>
            <person name="Kanapin A."/>
            <person name="Katoh M."/>
            <person name="Kawasawa Y."/>
            <person name="Kelso J."/>
            <person name="Kitamura H."/>
            <person name="Kitano H."/>
            <person name="Kollias G."/>
            <person name="Krishnan S.P."/>
            <person name="Kruger A."/>
            <person name="Kummerfeld S.K."/>
            <person name="Kurochkin I.V."/>
            <person name="Lareau L.F."/>
            <person name="Lazarevic D."/>
            <person name="Lipovich L."/>
            <person name="Liu J."/>
            <person name="Liuni S."/>
            <person name="McWilliam S."/>
            <person name="Madan Babu M."/>
            <person name="Madera M."/>
            <person name="Marchionni L."/>
            <person name="Matsuda H."/>
            <person name="Matsuzawa S."/>
            <person name="Miki H."/>
            <person name="Mignone F."/>
            <person name="Miyake S."/>
            <person name="Morris K."/>
            <person name="Mottagui-Tabar S."/>
            <person name="Mulder N."/>
            <person name="Nakano N."/>
            <person name="Nakauchi H."/>
            <person name="Ng P."/>
            <person name="Nilsson R."/>
            <person name="Nishiguchi S."/>
            <person name="Nishikawa S."/>
            <person name="Nori F."/>
            <person name="Ohara O."/>
            <person name="Okazaki Y."/>
            <person name="Orlando V."/>
            <person name="Pang K.C."/>
            <person name="Pavan W.J."/>
            <person name="Pavesi G."/>
            <person name="Pesole G."/>
            <person name="Petrovsky N."/>
            <person name="Piazza S."/>
            <person name="Reed J."/>
            <person name="Reid J.F."/>
            <person name="Ring B.Z."/>
            <person name="Ringwald M."/>
            <person name="Rost B."/>
            <person name="Ruan Y."/>
            <person name="Salzberg S.L."/>
            <person name="Sandelin A."/>
            <person name="Schneider C."/>
            <person name="Schoenbach C."/>
            <person name="Sekiguchi K."/>
            <person name="Semple C.A."/>
            <person name="Seno S."/>
            <person name="Sessa L."/>
            <person name="Sheng Y."/>
            <person name="Shibata Y."/>
            <person name="Shimada H."/>
            <person name="Shimada K."/>
            <person name="Silva D."/>
            <person name="Sinclair B."/>
            <person name="Sperling S."/>
            <person name="Stupka E."/>
            <person name="Sugiura K."/>
            <person name="Sultana R."/>
            <person name="Takenaka Y."/>
            <person name="Taki K."/>
            <person name="Tammoja K."/>
            <person name="Tan S.L."/>
            <person name="Tang S."/>
            <person name="Taylor M.S."/>
            <person name="Tegner J."/>
            <person name="Teichmann S.A."/>
            <person name="Ueda H.R."/>
            <person name="van Nimwegen E."/>
            <person name="Verardo R."/>
            <person name="Wei C.L."/>
            <person name="Yagi K."/>
            <person name="Yamanishi H."/>
            <person name="Zabarovsky E."/>
            <person name="Zhu S."/>
            <person name="Zimmer A."/>
            <person name="Hide W."/>
            <person name="Bult C."/>
            <person name="Grimmond S.M."/>
            <person name="Teasdale R.D."/>
            <person name="Liu E.T."/>
            <person name="Brusic V."/>
            <person name="Quackenbush J."/>
            <person name="Wahlestedt C."/>
            <person name="Mattick J.S."/>
            <person name="Hume D.A."/>
            <person name="Kai C."/>
            <person name="Sasaki D."/>
            <person name="Tomaru Y."/>
            <person name="Fukuda S."/>
            <person name="Kanamori-Katayama M."/>
            <person name="Suzuki M."/>
            <person name="Aoki J."/>
            <person name="Arakawa T."/>
            <person name="Iida J."/>
            <person name="Imamura K."/>
            <person name="Itoh M."/>
            <person name="Kato T."/>
            <person name="Kawaji H."/>
            <person name="Kawagashira N."/>
            <person name="Kawashima T."/>
            <person name="Kojima M."/>
            <person name="Kondo S."/>
            <person name="Konno H."/>
            <person name="Nakano K."/>
            <person name="Ninomiya N."/>
            <person name="Nishio T."/>
            <person name="Okada M."/>
            <person name="Plessy C."/>
            <person name="Shibata K."/>
            <person name="Shiraki T."/>
            <person name="Suzuki S."/>
            <person name="Tagami M."/>
            <person name="Waki K."/>
            <person name="Watahiki A."/>
            <person name="Okamura-Oho Y."/>
            <person name="Suzuki H."/>
            <person name="Kawai J."/>
            <person name="Hayashizaki Y."/>
        </authorList>
    </citation>
    <scope>NUCLEOTIDE SEQUENCE [LARGE SCALE MRNA]</scope>
    <source>
        <strain>C57BL/6J</strain>
        <tissue>Aorta</tissue>
        <tissue>Eye</tissue>
        <tissue>Mammary gland</tissue>
        <tissue>Vein</tissue>
    </source>
</reference>
<reference key="2">
    <citation type="journal article" date="2004" name="Genome Res.">
        <title>The status, quality, and expansion of the NIH full-length cDNA project: the Mammalian Gene Collection (MGC).</title>
        <authorList>
            <consortium name="The MGC Project Team"/>
        </authorList>
    </citation>
    <scope>NUCLEOTIDE SEQUENCE [LARGE SCALE MRNA]</scope>
    <source>
        <strain>FVB/N</strain>
        <tissue>Liver</tissue>
    </source>
</reference>
<reference key="3">
    <citation type="journal article" date="2024" name="EMBO Rep.">
        <title>RNF144B negatively regulates antiviral immunity by targeting MDA5 for autophagic degradation.</title>
        <authorList>
            <person name="Li G."/>
            <person name="Zhang J."/>
            <person name="Zhao Z."/>
            <person name="Wang J."/>
            <person name="Li J."/>
            <person name="Xu W."/>
            <person name="Cui Z."/>
            <person name="Sun P."/>
            <person name="Yuan H."/>
            <person name="Wang T."/>
            <person name="Li K."/>
            <person name="Bai X."/>
            <person name="Ma X."/>
            <person name="Li P."/>
            <person name="Fu Y."/>
            <person name="Cao Y."/>
            <person name="Bao H."/>
            <person name="Li D."/>
            <person name="Liu Z."/>
            <person name="Zhu N."/>
            <person name="Tang L."/>
            <person name="Lu Z."/>
        </authorList>
    </citation>
    <scope>FUNCTION</scope>
    <scope>DISRUPTION PHENOTYPE</scope>
</reference>
<evidence type="ECO:0000250" key="1">
    <source>
        <dbReference type="UniProtKB" id="O60260"/>
    </source>
</evidence>
<evidence type="ECO:0000250" key="2">
    <source>
        <dbReference type="UniProtKB" id="Q7Z419"/>
    </source>
</evidence>
<evidence type="ECO:0000255" key="3"/>
<evidence type="ECO:0000255" key="4">
    <source>
        <dbReference type="PROSITE-ProRule" id="PRU01221"/>
    </source>
</evidence>
<evidence type="ECO:0000269" key="5">
    <source>
    </source>
</evidence>
<evidence type="ECO:0000305" key="6"/>
<feature type="chain" id="PRO_0000055912" description="E3 ubiquitin-protein ligase RNF144B">
    <location>
        <begin position="1"/>
        <end position="301"/>
    </location>
</feature>
<feature type="transmembrane region" description="Helical" evidence="3">
    <location>
        <begin position="256"/>
        <end position="276"/>
    </location>
</feature>
<feature type="zinc finger region" description="RING-type 1" evidence="4">
    <location>
        <begin position="30"/>
        <end position="80"/>
    </location>
</feature>
<feature type="zinc finger region" description="IBR-type" evidence="4">
    <location>
        <begin position="101"/>
        <end position="166"/>
    </location>
</feature>
<feature type="zinc finger region" description="RING-type 2; atypical" evidence="4">
    <location>
        <begin position="191"/>
        <end position="220"/>
    </location>
</feature>
<feature type="region of interest" description="TRIAD supradomain" evidence="4">
    <location>
        <begin position="26"/>
        <end position="242"/>
    </location>
</feature>
<feature type="active site" evidence="4">
    <location>
        <position position="204"/>
    </location>
</feature>
<feature type="binding site" evidence="4">
    <location>
        <position position="30"/>
    </location>
    <ligand>
        <name>Zn(2+)</name>
        <dbReference type="ChEBI" id="CHEBI:29105"/>
        <label>1</label>
    </ligand>
</feature>
<feature type="binding site" evidence="4">
    <location>
        <position position="33"/>
    </location>
    <ligand>
        <name>Zn(2+)</name>
        <dbReference type="ChEBI" id="CHEBI:29105"/>
        <label>1</label>
    </ligand>
</feature>
<feature type="binding site" evidence="4">
    <location>
        <position position="53"/>
    </location>
    <ligand>
        <name>Zn(2+)</name>
        <dbReference type="ChEBI" id="CHEBI:29105"/>
        <label>1</label>
    </ligand>
</feature>
<feature type="binding site" evidence="4">
    <location>
        <position position="56"/>
    </location>
    <ligand>
        <name>Zn(2+)</name>
        <dbReference type="ChEBI" id="CHEBI:29105"/>
        <label>1</label>
    </ligand>
</feature>
<feature type="binding site" evidence="4">
    <location>
        <position position="121"/>
    </location>
    <ligand>
        <name>Zn(2+)</name>
        <dbReference type="ChEBI" id="CHEBI:29105"/>
        <label>2</label>
    </ligand>
</feature>
<feature type="binding site" evidence="4">
    <location>
        <position position="126"/>
    </location>
    <ligand>
        <name>Zn(2+)</name>
        <dbReference type="ChEBI" id="CHEBI:29105"/>
        <label>2</label>
    </ligand>
</feature>
<feature type="binding site" evidence="4">
    <location>
        <position position="145"/>
    </location>
    <ligand>
        <name>Zn(2+)</name>
        <dbReference type="ChEBI" id="CHEBI:29105"/>
        <label>2</label>
    </ligand>
</feature>
<feature type="binding site" evidence="4">
    <location>
        <position position="148"/>
    </location>
    <ligand>
        <name>Zn(2+)</name>
        <dbReference type="ChEBI" id="CHEBI:29105"/>
        <label>2</label>
    </ligand>
</feature>
<feature type="binding site" evidence="4">
    <location>
        <position position="153"/>
    </location>
    <ligand>
        <name>Zn(2+)</name>
        <dbReference type="ChEBI" id="CHEBI:29105"/>
        <label>3</label>
    </ligand>
</feature>
<feature type="binding site" evidence="4">
    <location>
        <position position="156"/>
    </location>
    <ligand>
        <name>Zn(2+)</name>
        <dbReference type="ChEBI" id="CHEBI:29105"/>
        <label>3</label>
    </ligand>
</feature>
<feature type="binding site" evidence="4">
    <location>
        <position position="161"/>
    </location>
    <ligand>
        <name>Zn(2+)</name>
        <dbReference type="ChEBI" id="CHEBI:29105"/>
        <label>3</label>
    </ligand>
</feature>
<feature type="binding site" evidence="4">
    <location>
        <position position="166"/>
    </location>
    <ligand>
        <name>Zn(2+)</name>
        <dbReference type="ChEBI" id="CHEBI:29105"/>
        <label>3</label>
    </ligand>
</feature>
<feature type="binding site" evidence="4">
    <location>
        <position position="191"/>
    </location>
    <ligand>
        <name>Zn(2+)</name>
        <dbReference type="ChEBI" id="CHEBI:29105"/>
        <label>4</label>
    </ligand>
</feature>
<feature type="binding site" evidence="4">
    <location>
        <position position="194"/>
    </location>
    <ligand>
        <name>Zn(2+)</name>
        <dbReference type="ChEBI" id="CHEBI:29105"/>
        <label>4</label>
    </ligand>
</feature>
<feature type="binding site" evidence="4">
    <location>
        <position position="209"/>
    </location>
    <ligand>
        <name>Zn(2+)</name>
        <dbReference type="ChEBI" id="CHEBI:29105"/>
        <label>4</label>
    </ligand>
</feature>
<feature type="binding site" evidence="4">
    <location>
        <position position="212"/>
    </location>
    <ligand>
        <name>Zn(2+)</name>
        <dbReference type="ChEBI" id="CHEBI:29105"/>
        <label>4</label>
    </ligand>
</feature>
<feature type="binding site" evidence="4">
    <location>
        <position position="217"/>
    </location>
    <ligand>
        <name>Zn(2+)</name>
        <dbReference type="ChEBI" id="CHEBI:29105"/>
        <label>5</label>
    </ligand>
</feature>
<feature type="binding site" evidence="4">
    <location>
        <position position="220"/>
    </location>
    <ligand>
        <name>Zn(2+)</name>
        <dbReference type="ChEBI" id="CHEBI:29105"/>
        <label>5</label>
    </ligand>
</feature>
<feature type="binding site" evidence="4">
    <location>
        <position position="232"/>
    </location>
    <ligand>
        <name>Zn(2+)</name>
        <dbReference type="ChEBI" id="CHEBI:29105"/>
        <label>5</label>
    </ligand>
</feature>
<feature type="binding site" evidence="4">
    <location>
        <position position="238"/>
    </location>
    <ligand>
        <name>Zn(2+)</name>
        <dbReference type="ChEBI" id="CHEBI:29105"/>
        <label>5</label>
    </ligand>
</feature>
<feature type="sequence conflict" description="In Ref. 1; BAC35416." evidence="6" ref="1">
    <original>P</original>
    <variation>T</variation>
    <location>
        <position position="174"/>
    </location>
</feature>
<feature type="sequence conflict" description="In Ref. 1; BAC35416." evidence="6" ref="1">
    <original>N</original>
    <variation>K</variation>
    <location>
        <position position="211"/>
    </location>
</feature>
<proteinExistence type="evidence at transcript level"/>
<sequence length="301" mass="33495">MDSVDGLQCLTMTAENPPSGDLIPAPLVTCKLCLCEQSLDKMTMLQECQCIFCTPCLKQYMVLSIREGCGSPITCPDMVCLNHGTLQETEIACLVPLDEFQLYQRLKFEREVHMDPLRTWCPVADCQTVCHISAGDPGQPVLVECPSCHLKFCSCCKDAWHEESSCRDSQSAMPEHGALFGTDADAPIKQCPVCRIYIERNEGCAQMMCKNCKHTFCWYCLQNLDNDIFLRHYDKGPCRNKLGHSRASVMWNRTQVVGILVGLGVIALVTSPLLLLASPCIICCVCKSCRGKKKKHDPSTT</sequence>
<keyword id="KW-0053">Apoptosis</keyword>
<keyword id="KW-0963">Cytoplasm</keyword>
<keyword id="KW-0472">Membrane</keyword>
<keyword id="KW-0479">Metal-binding</keyword>
<keyword id="KW-0496">Mitochondrion</keyword>
<keyword id="KW-1185">Reference proteome</keyword>
<keyword id="KW-0677">Repeat</keyword>
<keyword id="KW-0808">Transferase</keyword>
<keyword id="KW-0812">Transmembrane</keyword>
<keyword id="KW-1133">Transmembrane helix</keyword>
<keyword id="KW-0832">Ubl conjugation</keyword>
<keyword id="KW-0833">Ubl conjugation pathway</keyword>
<keyword id="KW-0862">Zinc</keyword>
<keyword id="KW-0863">Zinc-finger</keyword>